<name>HYAL1_CERCE</name>
<organism>
    <name type="scientific">Cerastes cerastes</name>
    <name type="common">Horned desert viper</name>
    <dbReference type="NCBI Taxonomy" id="8697"/>
    <lineage>
        <taxon>Eukaryota</taxon>
        <taxon>Metazoa</taxon>
        <taxon>Chordata</taxon>
        <taxon>Craniata</taxon>
        <taxon>Vertebrata</taxon>
        <taxon>Euteleostomi</taxon>
        <taxon>Lepidosauria</taxon>
        <taxon>Squamata</taxon>
        <taxon>Bifurcata</taxon>
        <taxon>Unidentata</taxon>
        <taxon>Episquamata</taxon>
        <taxon>Toxicofera</taxon>
        <taxon>Serpentes</taxon>
        <taxon>Colubroidea</taxon>
        <taxon>Viperidae</taxon>
        <taxon>Viperinae</taxon>
        <taxon>Cerastes</taxon>
    </lineage>
</organism>
<sequence>MYHIWIKFLAAWIFLKRFNGVHVMQAKAPMYRNEPFLVFWNAPTTQCRLRYKVDLDLKTFHIVSNANDSLSGSAVTIFYPNHLGVYPHIDDRGHFFHGIIPQNESLTKHLNKSKSDINRIIPLKAFHGLGVIDWENWRPQWDRNWGSKNVYRNRSIQFARDLHPELSEDKIRRLAKKEYEKAAKSFMRDTLLLAEEMRPDGYWGYYLYPDCQNYDYKTKGDQYTGKCPEIEMSRNDQLLWLWRDSTALFPNVYLEIILRSSDNALKFVHHRLKEAMRIASMAREDYALPVFAYARPFYAYTFEPLTQEDLVTTVGETAAMGAAGIVFWGSMQYASTVDSCQKVKKYMNGPLGRYIVNVTTAAKICSRVLCRKNGRCVRKHSDSNAFLHLFPESFRIMVYANATEKKVIVKGKLELENLIYLRENFMCQCYQGWKGLYCEEYSIKDIRKI</sequence>
<protein>
    <recommendedName>
        <fullName>Hyaluronidase-1</fullName>
        <shortName>Hy-1</shortName>
        <ecNumber>3.2.1.35</ecNumber>
    </recommendedName>
    <alternativeName>
        <fullName>Hyaluronoglucosaminidase-1</fullName>
    </alternativeName>
    <alternativeName>
        <fullName>Venom spreading factor</fullName>
    </alternativeName>
</protein>
<proteinExistence type="evidence at transcript level"/>
<keyword id="KW-1015">Disulfide bond</keyword>
<keyword id="KW-0245">EGF-like domain</keyword>
<keyword id="KW-0325">Glycoprotein</keyword>
<keyword id="KW-0326">Glycosidase</keyword>
<keyword id="KW-0378">Hydrolase</keyword>
<keyword id="KW-0964">Secreted</keyword>
<keyword id="KW-0732">Signal</keyword>
<comment type="function">
    <text evidence="1">Snake venom endo-hyaluronidase that degrades hyaluronan to smaller oligosaccharide fragments. In venom, it is not toxic by itself, but increases the diffusion of other venom proteins by degrading the extracellular matrix. In addition, it displays antiedematogenic activity (By similarity).</text>
</comment>
<comment type="catalytic activity">
    <reaction>
        <text>Random hydrolysis of (1-&gt;4)-linkages between N-acetyl-beta-D-glucosamine and D-glucuronate residues in hyaluronate.</text>
        <dbReference type="EC" id="3.2.1.35"/>
    </reaction>
</comment>
<comment type="subunit">
    <text evidence="1">Monomer.</text>
</comment>
<comment type="subcellular location">
    <subcellularLocation>
        <location evidence="1">Secreted</location>
    </subcellularLocation>
</comment>
<comment type="tissue specificity">
    <text>Expressed by the venom gland.</text>
</comment>
<comment type="similarity">
    <text evidence="3">Belongs to the glycosyl hydrolase 56 family.</text>
</comment>
<feature type="signal peptide" evidence="1">
    <location>
        <begin position="1"/>
        <end position="23"/>
    </location>
</feature>
<feature type="chain" id="PRO_0000420458" description="Hyaluronidase-1">
    <location>
        <begin position="24"/>
        <end position="449"/>
    </location>
</feature>
<feature type="domain" description="EGF-like">
    <location>
        <begin position="427"/>
        <end position="438"/>
    </location>
</feature>
<feature type="active site" description="Proton donor" evidence="1">
    <location>
        <position position="135"/>
    </location>
</feature>
<feature type="glycosylation site" description="N-linked (GlcNAc...) asparagine" evidence="2">
    <location>
        <position position="67"/>
    </location>
</feature>
<feature type="glycosylation site" description="N-linked (GlcNAc...) asparagine" evidence="2">
    <location>
        <position position="103"/>
    </location>
</feature>
<feature type="glycosylation site" description="N-linked (GlcNAc...) asparagine" evidence="2">
    <location>
        <position position="111"/>
    </location>
</feature>
<feature type="glycosylation site" description="N-linked (GlcNAc...) asparagine" evidence="2">
    <location>
        <position position="153"/>
    </location>
</feature>
<feature type="glycosylation site" description="N-linked (GlcNAc...) asparagine" evidence="2">
    <location>
        <position position="357"/>
    </location>
</feature>
<feature type="glycosylation site" description="N-linked (GlcNAc...) asparagine" evidence="2">
    <location>
        <position position="401"/>
    </location>
</feature>
<feature type="disulfide bond" evidence="1">
    <location>
        <begin position="47"/>
        <end position="340"/>
    </location>
</feature>
<feature type="disulfide bond" evidence="1">
    <location>
        <begin position="211"/>
        <end position="227"/>
    </location>
</feature>
<feature type="disulfide bond" evidence="1">
    <location>
        <begin position="365"/>
        <end position="376"/>
    </location>
</feature>
<feature type="disulfide bond" evidence="1">
    <location>
        <begin position="370"/>
        <end position="427"/>
    </location>
</feature>
<feature type="disulfide bond" evidence="1">
    <location>
        <begin position="429"/>
        <end position="438"/>
    </location>
</feature>
<reference key="1">
    <citation type="journal article" date="2007" name="Gene">
        <title>Identification of cDNAs encoding viper venom hyaluronidases: cross-generic sequence conservation of full-length and unusually short variant transcripts.</title>
        <authorList>
            <person name="Harrison R.A."/>
            <person name="Ibison F."/>
            <person name="Wilbraham D."/>
            <person name="Wagstaff S.C."/>
        </authorList>
    </citation>
    <scope>NUCLEOTIDE SEQUENCE [MRNA]</scope>
    <source>
        <tissue>Venom gland</tissue>
    </source>
</reference>
<dbReference type="EC" id="3.2.1.35"/>
<dbReference type="EMBL" id="DQ840250">
    <property type="protein sequence ID" value="ABI33938.1"/>
    <property type="molecule type" value="mRNA"/>
</dbReference>
<dbReference type="SMR" id="A3QVN3"/>
<dbReference type="CAZy" id="GH56">
    <property type="family name" value="Glycoside Hydrolase Family 56"/>
</dbReference>
<dbReference type="GO" id="GO:0031410">
    <property type="term" value="C:cytoplasmic vesicle"/>
    <property type="evidence" value="ECO:0007669"/>
    <property type="project" value="TreeGrafter"/>
</dbReference>
<dbReference type="GO" id="GO:0005576">
    <property type="term" value="C:extracellular region"/>
    <property type="evidence" value="ECO:0007669"/>
    <property type="project" value="UniProtKB-SubCell"/>
</dbReference>
<dbReference type="GO" id="GO:0004415">
    <property type="term" value="F:hyalurononglucosaminidase activity"/>
    <property type="evidence" value="ECO:0007669"/>
    <property type="project" value="UniProtKB-EC"/>
</dbReference>
<dbReference type="GO" id="GO:0005975">
    <property type="term" value="P:carbohydrate metabolic process"/>
    <property type="evidence" value="ECO:0007669"/>
    <property type="project" value="InterPro"/>
</dbReference>
<dbReference type="GO" id="GO:0030214">
    <property type="term" value="P:hyaluronan catabolic process"/>
    <property type="evidence" value="ECO:0007669"/>
    <property type="project" value="TreeGrafter"/>
</dbReference>
<dbReference type="FunFam" id="3.20.20.70:FF:000065">
    <property type="entry name" value="Hyaluronidase"/>
    <property type="match status" value="1"/>
</dbReference>
<dbReference type="Gene3D" id="3.20.20.70">
    <property type="entry name" value="Aldolase class I"/>
    <property type="match status" value="1"/>
</dbReference>
<dbReference type="InterPro" id="IPR013785">
    <property type="entry name" value="Aldolase_TIM"/>
</dbReference>
<dbReference type="InterPro" id="IPR017853">
    <property type="entry name" value="Glycoside_hydrolase_SF"/>
</dbReference>
<dbReference type="InterPro" id="IPR018155">
    <property type="entry name" value="Hyaluronidase"/>
</dbReference>
<dbReference type="PANTHER" id="PTHR11769">
    <property type="entry name" value="HYALURONIDASE"/>
    <property type="match status" value="1"/>
</dbReference>
<dbReference type="PANTHER" id="PTHR11769:SF9">
    <property type="entry name" value="HYALURONIDASE"/>
    <property type="match status" value="1"/>
</dbReference>
<dbReference type="Pfam" id="PF01630">
    <property type="entry name" value="Glyco_hydro_56"/>
    <property type="match status" value="1"/>
</dbReference>
<dbReference type="PIRSF" id="PIRSF038193">
    <property type="entry name" value="Hyaluronidase"/>
    <property type="match status" value="1"/>
</dbReference>
<dbReference type="PRINTS" id="PR00846">
    <property type="entry name" value="GLHYDRLASE56"/>
</dbReference>
<dbReference type="SUPFAM" id="SSF51445">
    <property type="entry name" value="(Trans)glycosidases"/>
    <property type="match status" value="1"/>
</dbReference>
<dbReference type="PROSITE" id="PS00022">
    <property type="entry name" value="EGF_1"/>
    <property type="match status" value="1"/>
</dbReference>
<dbReference type="PROSITE" id="PS01186">
    <property type="entry name" value="EGF_2"/>
    <property type="match status" value="1"/>
</dbReference>
<evidence type="ECO:0000250" key="1"/>
<evidence type="ECO:0000255" key="2"/>
<evidence type="ECO:0000305" key="3"/>
<accession>A3QVN3</accession>